<comment type="function">
    <text evidence="1">Part of the ABC transporter complex XylFGH involved in xylose import. Responsible for energy coupling to the transport system.</text>
</comment>
<comment type="catalytic activity">
    <reaction evidence="1">
        <text>D-xylose(out) + ATP + H2O = D-xylose(in) + ADP + phosphate + H(+)</text>
        <dbReference type="Rhea" id="RHEA:29899"/>
        <dbReference type="ChEBI" id="CHEBI:15377"/>
        <dbReference type="ChEBI" id="CHEBI:15378"/>
        <dbReference type="ChEBI" id="CHEBI:30616"/>
        <dbReference type="ChEBI" id="CHEBI:43474"/>
        <dbReference type="ChEBI" id="CHEBI:53455"/>
        <dbReference type="ChEBI" id="CHEBI:456216"/>
        <dbReference type="EC" id="7.5.2.10"/>
    </reaction>
</comment>
<comment type="subunit">
    <text evidence="1">The complex is composed of two ATP-binding proteins (XylG), two transmembrane proteins (XylH) and a solute-binding protein (XylF).</text>
</comment>
<comment type="subcellular location">
    <subcellularLocation>
        <location evidence="1">Cell inner membrane</location>
        <topology evidence="1">Peripheral membrane protein</topology>
    </subcellularLocation>
</comment>
<comment type="similarity">
    <text evidence="1">Belongs to the ABC transporter superfamily. Xylose importer (TC 3.A.1.2.4) family.</text>
</comment>
<evidence type="ECO:0000255" key="1">
    <source>
        <dbReference type="HAMAP-Rule" id="MF_01722"/>
    </source>
</evidence>
<evidence type="ECO:0000256" key="2">
    <source>
        <dbReference type="SAM" id="MobiDB-lite"/>
    </source>
</evidence>
<reference key="1">
    <citation type="journal article" date="2003" name="Proc. Natl. Acad. Sci. U.S.A.">
        <title>The complete genome sequence of the Arabidopsis and tomato pathogen Pseudomonas syringae pv. tomato DC3000.</title>
        <authorList>
            <person name="Buell C.R."/>
            <person name="Joardar V."/>
            <person name="Lindeberg M."/>
            <person name="Selengut J."/>
            <person name="Paulsen I.T."/>
            <person name="Gwinn M.L."/>
            <person name="Dodson R.J."/>
            <person name="DeBoy R.T."/>
            <person name="Durkin A.S."/>
            <person name="Kolonay J.F."/>
            <person name="Madupu R."/>
            <person name="Daugherty S.C."/>
            <person name="Brinkac L.M."/>
            <person name="Beanan M.J."/>
            <person name="Haft D.H."/>
            <person name="Nelson W.C."/>
            <person name="Davidsen T.M."/>
            <person name="Zafar N."/>
            <person name="Zhou L."/>
            <person name="Liu J."/>
            <person name="Yuan Q."/>
            <person name="Khouri H.M."/>
            <person name="Fedorova N.B."/>
            <person name="Tran B."/>
            <person name="Russell D."/>
            <person name="Berry K.J."/>
            <person name="Utterback T.R."/>
            <person name="Van Aken S.E."/>
            <person name="Feldblyum T.V."/>
            <person name="D'Ascenzo M."/>
            <person name="Deng W.-L."/>
            <person name="Ramos A.R."/>
            <person name="Alfano J.R."/>
            <person name="Cartinhour S."/>
            <person name="Chatterjee A.K."/>
            <person name="Delaney T.P."/>
            <person name="Lazarowitz S.G."/>
            <person name="Martin G.B."/>
            <person name="Schneider D.J."/>
            <person name="Tang X."/>
            <person name="Bender C.L."/>
            <person name="White O."/>
            <person name="Fraser C.M."/>
            <person name="Collmer A."/>
        </authorList>
    </citation>
    <scope>NUCLEOTIDE SEQUENCE [LARGE SCALE GENOMIC DNA]</scope>
    <source>
        <strain>ATCC BAA-871 / DC3000</strain>
    </source>
</reference>
<dbReference type="EC" id="7.5.2.10" evidence="1"/>
<dbReference type="EMBL" id="AE016853">
    <property type="protein sequence ID" value="AAO56496.1"/>
    <property type="molecule type" value="Genomic_DNA"/>
</dbReference>
<dbReference type="RefSeq" id="NP_792801.1">
    <property type="nucleotide sequence ID" value="NC_004578.1"/>
</dbReference>
<dbReference type="SMR" id="Q880Z2"/>
<dbReference type="STRING" id="223283.PSPTO_3004"/>
<dbReference type="KEGG" id="pst:PSPTO_3004"/>
<dbReference type="PATRIC" id="fig|223283.9.peg.3068"/>
<dbReference type="eggNOG" id="COG1129">
    <property type="taxonomic scope" value="Bacteria"/>
</dbReference>
<dbReference type="HOGENOM" id="CLU_000604_92_3_6"/>
<dbReference type="OrthoDB" id="9776369at2"/>
<dbReference type="PhylomeDB" id="Q880Z2"/>
<dbReference type="Proteomes" id="UP000002515">
    <property type="component" value="Chromosome"/>
</dbReference>
<dbReference type="GO" id="GO:0005886">
    <property type="term" value="C:plasma membrane"/>
    <property type="evidence" value="ECO:0007669"/>
    <property type="project" value="UniProtKB-SubCell"/>
</dbReference>
<dbReference type="GO" id="GO:0015614">
    <property type="term" value="F:ABC-type D-xylose transporter activity"/>
    <property type="evidence" value="ECO:0007669"/>
    <property type="project" value="UniProtKB-EC"/>
</dbReference>
<dbReference type="GO" id="GO:0005524">
    <property type="term" value="F:ATP binding"/>
    <property type="evidence" value="ECO:0007669"/>
    <property type="project" value="UniProtKB-KW"/>
</dbReference>
<dbReference type="GO" id="GO:0016887">
    <property type="term" value="F:ATP hydrolysis activity"/>
    <property type="evidence" value="ECO:0007669"/>
    <property type="project" value="InterPro"/>
</dbReference>
<dbReference type="CDD" id="cd03216">
    <property type="entry name" value="ABC_Carb_Monos_I"/>
    <property type="match status" value="1"/>
</dbReference>
<dbReference type="CDD" id="cd03215">
    <property type="entry name" value="ABC_Carb_Monos_II"/>
    <property type="match status" value="1"/>
</dbReference>
<dbReference type="FunFam" id="3.40.50.300:FF:000126">
    <property type="entry name" value="Galactose/methyl galactoside import ATP-binding protein MglA"/>
    <property type="match status" value="1"/>
</dbReference>
<dbReference type="FunFam" id="3.40.50.300:FF:000127">
    <property type="entry name" value="Ribose import ATP-binding protein RbsA"/>
    <property type="match status" value="1"/>
</dbReference>
<dbReference type="Gene3D" id="3.40.50.300">
    <property type="entry name" value="P-loop containing nucleotide triphosphate hydrolases"/>
    <property type="match status" value="2"/>
</dbReference>
<dbReference type="InterPro" id="IPR003593">
    <property type="entry name" value="AAA+_ATPase"/>
</dbReference>
<dbReference type="InterPro" id="IPR050107">
    <property type="entry name" value="ABC_carbohydrate_import_ATPase"/>
</dbReference>
<dbReference type="InterPro" id="IPR003439">
    <property type="entry name" value="ABC_transporter-like_ATP-bd"/>
</dbReference>
<dbReference type="InterPro" id="IPR017871">
    <property type="entry name" value="ABC_transporter-like_CS"/>
</dbReference>
<dbReference type="InterPro" id="IPR013455">
    <property type="entry name" value="ABC_transptr_XylG"/>
</dbReference>
<dbReference type="InterPro" id="IPR027417">
    <property type="entry name" value="P-loop_NTPase"/>
</dbReference>
<dbReference type="NCBIfam" id="NF010069">
    <property type="entry name" value="PRK13549.1"/>
    <property type="match status" value="1"/>
</dbReference>
<dbReference type="NCBIfam" id="TIGR02633">
    <property type="entry name" value="xylG"/>
    <property type="match status" value="1"/>
</dbReference>
<dbReference type="PANTHER" id="PTHR43790">
    <property type="entry name" value="CARBOHYDRATE TRANSPORT ATP-BINDING PROTEIN MG119-RELATED"/>
    <property type="match status" value="1"/>
</dbReference>
<dbReference type="PANTHER" id="PTHR43790:SF1">
    <property type="entry name" value="XYLOSE IMPORT ATP-BINDING PROTEIN XYLG"/>
    <property type="match status" value="1"/>
</dbReference>
<dbReference type="Pfam" id="PF00005">
    <property type="entry name" value="ABC_tran"/>
    <property type="match status" value="2"/>
</dbReference>
<dbReference type="SMART" id="SM00382">
    <property type="entry name" value="AAA"/>
    <property type="match status" value="2"/>
</dbReference>
<dbReference type="SUPFAM" id="SSF52540">
    <property type="entry name" value="P-loop containing nucleoside triphosphate hydrolases"/>
    <property type="match status" value="2"/>
</dbReference>
<dbReference type="PROSITE" id="PS00211">
    <property type="entry name" value="ABC_TRANSPORTER_1"/>
    <property type="match status" value="1"/>
</dbReference>
<dbReference type="PROSITE" id="PS50893">
    <property type="entry name" value="ABC_TRANSPORTER_2"/>
    <property type="match status" value="2"/>
</dbReference>
<dbReference type="PROSITE" id="PS51280">
    <property type="entry name" value="XYLG"/>
    <property type="match status" value="1"/>
</dbReference>
<sequence length="528" mass="57351">MSDYLLQMNGIVKTFDGVKALNGIDIKVRPGECVGLCGENGAGKSTLMKVLSAVYPYGTWEGEILWDGNPLKAQSISETEAAGIVIIHQELTLVPDLSVAENIFMGHELTLRGGRMNYPAMIHRAETLMRELKVPDMNVALPVSQYGGGHQQLVEIAKALNKQARLLILDEPSSALTRSEIEVLLGIIHDLKAKGVACVYISHKLDEVAAVCDTISVIRDGKHIATTAMAEMDIPKIITQMVGREMSNLYPTDAHDIGEVIFEARNITCYDVDNPKRKRVDDISFVLKRGEILGIAGLVGAGRTELVSALFGAYPGRYSGEVWLDGQPVDTRTPLKSIRAGLCMVPEDRKRQGIIPDMGVGQNITLAVLDNYSKMTRIDAEAELGSIDREISRMHLKTASPFLPITSLSGGNQQKAVLAKMLLTRPRVLILDEPTRGVDVGAKYEIYKLMGALAAEGVAIIMVSSELAEVLGVSDRVLVIGEGRLCGDFINHELTQEQVLAAALSHPGDPDSNDPANNNHNDNDRKTT</sequence>
<protein>
    <recommendedName>
        <fullName evidence="1">Xylose import ATP-binding protein XylG</fullName>
        <ecNumber evidence="1">7.5.2.10</ecNumber>
    </recommendedName>
</protein>
<accession>Q880Z2</accession>
<feature type="chain" id="PRO_0000271512" description="Xylose import ATP-binding protein XylG">
    <location>
        <begin position="1"/>
        <end position="528"/>
    </location>
</feature>
<feature type="domain" description="ABC transporter 1" evidence="1">
    <location>
        <begin position="6"/>
        <end position="245"/>
    </location>
</feature>
<feature type="domain" description="ABC transporter 2" evidence="1">
    <location>
        <begin position="262"/>
        <end position="507"/>
    </location>
</feature>
<feature type="region of interest" description="Disordered" evidence="2">
    <location>
        <begin position="504"/>
        <end position="528"/>
    </location>
</feature>
<feature type="binding site" evidence="1">
    <location>
        <begin position="38"/>
        <end position="45"/>
    </location>
    <ligand>
        <name>ATP</name>
        <dbReference type="ChEBI" id="CHEBI:30616"/>
    </ligand>
</feature>
<organism>
    <name type="scientific">Pseudomonas syringae pv. tomato (strain ATCC BAA-871 / DC3000)</name>
    <dbReference type="NCBI Taxonomy" id="223283"/>
    <lineage>
        <taxon>Bacteria</taxon>
        <taxon>Pseudomonadati</taxon>
        <taxon>Pseudomonadota</taxon>
        <taxon>Gammaproteobacteria</taxon>
        <taxon>Pseudomonadales</taxon>
        <taxon>Pseudomonadaceae</taxon>
        <taxon>Pseudomonas</taxon>
    </lineage>
</organism>
<proteinExistence type="inferred from homology"/>
<gene>
    <name evidence="1" type="primary">xylG</name>
    <name type="ordered locus">PSPTO_3004</name>
</gene>
<keyword id="KW-0067">ATP-binding</keyword>
<keyword id="KW-0997">Cell inner membrane</keyword>
<keyword id="KW-1003">Cell membrane</keyword>
<keyword id="KW-0472">Membrane</keyword>
<keyword id="KW-0547">Nucleotide-binding</keyword>
<keyword id="KW-1185">Reference proteome</keyword>
<keyword id="KW-0677">Repeat</keyword>
<keyword id="KW-0762">Sugar transport</keyword>
<keyword id="KW-1278">Translocase</keyword>
<keyword id="KW-0813">Transport</keyword>
<name>XYLG_PSESM</name>